<gene>
    <name type="primary">OPG065</name>
    <name type="ordered locus">VACWR059</name>
    <name evidence="16" type="ORF">E3L</name>
</gene>
<organism>
    <name type="scientific">Vaccinia virus (strain Western Reserve)</name>
    <name type="common">VACV</name>
    <name type="synonym">Vaccinia virus (strain WR)</name>
    <dbReference type="NCBI Taxonomy" id="10254"/>
    <lineage>
        <taxon>Viruses</taxon>
        <taxon>Varidnaviria</taxon>
        <taxon>Bamfordvirae</taxon>
        <taxon>Nucleocytoviricota</taxon>
        <taxon>Pokkesviricetes</taxon>
        <taxon>Chitovirales</taxon>
        <taxon>Poxviridae</taxon>
        <taxon>Chordopoxvirinae</taxon>
        <taxon>Orthopoxvirus</taxon>
        <taxon>Vaccinia virus</taxon>
    </lineage>
</organism>
<dbReference type="EMBL" id="M36339">
    <property type="protein sequence ID" value="AAB59823.1"/>
    <property type="molecule type" value="Genomic_DNA"/>
</dbReference>
<dbReference type="EMBL" id="AY243312">
    <property type="protein sequence ID" value="AAO89338.1"/>
    <property type="molecule type" value="Genomic_DNA"/>
</dbReference>
<dbReference type="PIR" id="B35928">
    <property type="entry name" value="B35928"/>
</dbReference>
<dbReference type="RefSeq" id="YP_232941.1">
    <property type="nucleotide sequence ID" value="NC_006998.1"/>
</dbReference>
<dbReference type="PDB" id="7C0I">
    <property type="method" value="X-ray"/>
    <property type="resolution" value="2.40 A"/>
    <property type="chains" value="A/B/C=2-40, A/B/C=56-78"/>
</dbReference>
<dbReference type="PDB" id="8I9J">
    <property type="method" value="EM"/>
    <property type="resolution" value="6.39 A"/>
    <property type="chains" value="B=9-70, C=96-183"/>
</dbReference>
<dbReference type="PDBsum" id="7C0I"/>
<dbReference type="PDBsum" id="8I9J"/>
<dbReference type="EMDB" id="EMD-35274"/>
<dbReference type="SMR" id="P21605"/>
<dbReference type="BioGRID" id="3508946">
    <property type="interactions" value="1"/>
</dbReference>
<dbReference type="DIP" id="DIP-2175N"/>
<dbReference type="IntAct" id="P21605">
    <property type="interactions" value="45"/>
</dbReference>
<dbReference type="MINT" id="P21605"/>
<dbReference type="DNASU" id="3707592"/>
<dbReference type="GeneID" id="3707592"/>
<dbReference type="KEGG" id="vg:3707592"/>
<dbReference type="Proteomes" id="UP000000344">
    <property type="component" value="Genome"/>
</dbReference>
<dbReference type="GO" id="GO:0005737">
    <property type="term" value="C:cytoplasm"/>
    <property type="evidence" value="ECO:0000305"/>
    <property type="project" value="UniProt"/>
</dbReference>
<dbReference type="GO" id="GO:0003726">
    <property type="term" value="F:double-stranded RNA adenosine deaminase activity"/>
    <property type="evidence" value="ECO:0007669"/>
    <property type="project" value="InterPro"/>
</dbReference>
<dbReference type="GO" id="GO:0003725">
    <property type="term" value="F:double-stranded RNA binding"/>
    <property type="evidence" value="ECO:0000314"/>
    <property type="project" value="UniProtKB"/>
</dbReference>
<dbReference type="GO" id="GO:0140311">
    <property type="term" value="F:protein sequestering activity"/>
    <property type="evidence" value="ECO:0000314"/>
    <property type="project" value="UniProt"/>
</dbReference>
<dbReference type="GO" id="GO:0030291">
    <property type="term" value="F:protein serine/threonine kinase inhibitor activity"/>
    <property type="evidence" value="ECO:0007669"/>
    <property type="project" value="UniProtKB-KW"/>
</dbReference>
<dbReference type="GO" id="GO:0003723">
    <property type="term" value="F:RNA binding"/>
    <property type="evidence" value="ECO:0000314"/>
    <property type="project" value="UniProt"/>
</dbReference>
<dbReference type="GO" id="GO:0042783">
    <property type="term" value="P:symbiont-mediated evasion of host immune response"/>
    <property type="evidence" value="ECO:0000314"/>
    <property type="project" value="UniProt"/>
</dbReference>
<dbReference type="GO" id="GO:0033668">
    <property type="term" value="P:symbiont-mediated suppression of host apoptosis"/>
    <property type="evidence" value="ECO:0000314"/>
    <property type="project" value="UniProtKB"/>
</dbReference>
<dbReference type="GO" id="GO:0039548">
    <property type="term" value="P:symbiont-mediated suppression of host cytoplasmic pattern recognition receptor signaling pathway via inhibition of IRF3 activity"/>
    <property type="evidence" value="ECO:0007669"/>
    <property type="project" value="UniProtKB-KW"/>
</dbReference>
<dbReference type="GO" id="GO:0039557">
    <property type="term" value="P:symbiont-mediated suppression of host cytoplasmic pattern recognition receptor signaling pathway via inhibition of IRF7 activity"/>
    <property type="evidence" value="ECO:0007669"/>
    <property type="project" value="UniProtKB-KW"/>
</dbReference>
<dbReference type="GO" id="GO:0039579">
    <property type="term" value="P:symbiont-mediated suppression of host ISG15-protein conjugation"/>
    <property type="evidence" value="ECO:0000314"/>
    <property type="project" value="UniProtKB"/>
</dbReference>
<dbReference type="GO" id="GO:0039580">
    <property type="term" value="P:symbiont-mediated suppression of host PKR/eIFalpha signaling"/>
    <property type="evidence" value="ECO:0000314"/>
    <property type="project" value="UniProtKB"/>
</dbReference>
<dbReference type="GO" id="GO:0039502">
    <property type="term" value="P:symbiont-mediated suppression of host type I interferon-mediated signaling pathway"/>
    <property type="evidence" value="ECO:0000314"/>
    <property type="project" value="UniProtKB"/>
</dbReference>
<dbReference type="CDD" id="cd19875">
    <property type="entry name" value="DSRM_EIF2AK2-like"/>
    <property type="match status" value="1"/>
</dbReference>
<dbReference type="FunFam" id="3.30.160.20:FF:000108">
    <property type="entry name" value="Double-stranded RNA-binding protein"/>
    <property type="match status" value="1"/>
</dbReference>
<dbReference type="Gene3D" id="3.30.160.20">
    <property type="match status" value="1"/>
</dbReference>
<dbReference type="Gene3D" id="1.10.10.10">
    <property type="entry name" value="Winged helix-like DNA-binding domain superfamily/Winged helix DNA-binding domain"/>
    <property type="match status" value="1"/>
</dbReference>
<dbReference type="InterPro" id="IPR014720">
    <property type="entry name" value="dsRBD_dom"/>
</dbReference>
<dbReference type="InterPro" id="IPR009179">
    <property type="entry name" value="E3L"/>
</dbReference>
<dbReference type="InterPro" id="IPR036388">
    <property type="entry name" value="WH-like_DNA-bd_sf"/>
</dbReference>
<dbReference type="InterPro" id="IPR036390">
    <property type="entry name" value="WH_DNA-bd_sf"/>
</dbReference>
<dbReference type="InterPro" id="IPR042371">
    <property type="entry name" value="Z_dom"/>
</dbReference>
<dbReference type="Pfam" id="PF00035">
    <property type="entry name" value="dsrm"/>
    <property type="match status" value="1"/>
</dbReference>
<dbReference type="Pfam" id="PF02295">
    <property type="entry name" value="z-alpha"/>
    <property type="match status" value="1"/>
</dbReference>
<dbReference type="PIRSF" id="PIRSF004008">
    <property type="entry name" value="VAC_E3L"/>
    <property type="match status" value="1"/>
</dbReference>
<dbReference type="SMART" id="SM00358">
    <property type="entry name" value="DSRM"/>
    <property type="match status" value="1"/>
</dbReference>
<dbReference type="SMART" id="SM00550">
    <property type="entry name" value="Zalpha"/>
    <property type="match status" value="1"/>
</dbReference>
<dbReference type="SUPFAM" id="SSF54768">
    <property type="entry name" value="dsRNA-binding domain-like"/>
    <property type="match status" value="1"/>
</dbReference>
<dbReference type="SUPFAM" id="SSF46785">
    <property type="entry name" value="Winged helix' DNA-binding domain"/>
    <property type="match status" value="1"/>
</dbReference>
<dbReference type="PROSITE" id="PS50137">
    <property type="entry name" value="DS_RBD"/>
    <property type="match status" value="1"/>
</dbReference>
<dbReference type="PROSITE" id="PS50139">
    <property type="entry name" value="Z_BINDING"/>
    <property type="match status" value="1"/>
</dbReference>
<comment type="function">
    <text evidence="6 7 8 9 10 12 14">RNA-binding protein that plays a role in the inhibition of multiple cellular antiviral responses activated by double-stranded RNA (dsRNA), such as inhibition of PKR activation, necroptosis, and IFN-mediated antiviral activities (PubMed:1350676, PubMed:1681618, PubMed:18604270, PubMed:24257616, PubMed:25740987). Recognizes and binds Z-RNA structures via its Z-binding domain and dsRNA via its DRBM domain: RNA-binding activity is required to escape host ZBP1-dependent necroptosis (PubMed:29073079, PubMed:34192517). Mechanistically, the Z-binding domain binds Z-RNAs that are produced during vaccinia virus infection, thereby competing with Z-RNA detection by host ZBP1, suppressing ZBP1-dependent necroptosis (PubMed:34192517). Acts as a key inhibitor of the interferon response by blocking the phosphorylation and subsequent activation of IRF3 and IRF7 kinases that are required for interferon-alpha gene expression (PubMed:22419806). Inhibits NF-kappa-B activation and the ubiquitin-like protein ISG15, which is an early antiviral protein (PubMed:18604270, PubMed:24257616). The binding with host ISG15 subsequently blocks host ISGylation (PubMed:18604270, PubMed:24257616).</text>
</comment>
<comment type="subunit">
    <text evidence="9 10 12">Interacts with host G1P2/ISG15 (PubMed:24257616). Interacts with host EIF2AK2/PKR (PubMed:25740987). Interacts with host ZBP1 (PubMed:29073079).</text>
</comment>
<comment type="alternative products">
    <event type="alternative initiation"/>
    <isoform>
        <id>P21605-1</id>
        <name evidence="17">Long</name>
        <sequence type="displayed"/>
    </isoform>
    <isoform>
        <id>P21605-2</id>
        <name evidence="17">Short</name>
        <sequence type="described" ref="VSP_018957"/>
    </isoform>
</comment>
<comment type="developmental stage">
    <text evidence="6">Detected at early times, by 2 hours post infection, peaks at 5 hours post infection, and decreases during the late phase of virus replication.</text>
</comment>
<comment type="induction">
    <text evidence="11">Expressed in the early phase of the viral replicative cycle.</text>
</comment>
<comment type="domain">
    <text evidence="14">Contains a dsRNA binding domain (DRBM) and a Z-RNA binding domain (PubMed:34192517). The Z-binding domain recognizes and binds Z-RNA structures.</text>
</comment>
<comment type="similarity">
    <text evidence="18">Belongs to the orthopoxvirus OPG065 family.</text>
</comment>
<comment type="caution">
    <text evidence="3 4 14">Was reported to bind Z-DNA structures (PubMed:12777633, PubMed:14757814). However, it probably binds Z-RNA in vivo (PubMed:34192517).</text>
</comment>
<protein>
    <recommendedName>
        <fullName>RNA-binding protein OPG065</fullName>
    </recommendedName>
    <alternativeName>
        <fullName>RNA-binding protein E3</fullName>
    </alternativeName>
    <alternativeName>
        <fullName evidence="17">p25</fullName>
    </alternativeName>
</protein>
<keyword id="KW-0002">3D-structure</keyword>
<keyword id="KW-0024">Alternative initiation</keyword>
<keyword id="KW-0903">Direct protein sequencing</keyword>
<keyword id="KW-0945">Host-virus interaction</keyword>
<keyword id="KW-1090">Inhibition of host innate immune response by virus</keyword>
<keyword id="KW-1114">Inhibition of host interferon signaling pathway by virus</keyword>
<keyword id="KW-1092">Inhibition of host IRF3 by virus</keyword>
<keyword id="KW-1093">Inhibition of host IRF7 by virus</keyword>
<keyword id="KW-1095">Inhibition of host ISG15 by virus</keyword>
<keyword id="KW-1102">Inhibition of host PKR by virus</keyword>
<keyword id="KW-1113">Inhibition of host RLR pathway by virus</keyword>
<keyword id="KW-0922">Interferon antiviral system evasion</keyword>
<keyword id="KW-1119">Modulation of host cell apoptosis by virus</keyword>
<keyword id="KW-1185">Reference proteome</keyword>
<keyword id="KW-0694">RNA-binding</keyword>
<keyword id="KW-0899">Viral immunoevasion</keyword>
<feature type="chain" id="PRO_0000099448" description="RNA-binding protein OPG065">
    <location>
        <begin position="1"/>
        <end position="190"/>
    </location>
</feature>
<feature type="domain" description="Z-binding" evidence="1">
    <location>
        <begin position="5"/>
        <end position="70"/>
    </location>
</feature>
<feature type="domain" description="DRBM" evidence="2">
    <location>
        <begin position="117"/>
        <end position="184"/>
    </location>
</feature>
<feature type="splice variant" id="VSP_018957" description="In isoform Short." evidence="18">
    <location>
        <begin position="1"/>
        <end position="37"/>
    </location>
</feature>
<feature type="mutagenesis site" description="Strongly attenuated virulence. Defects are caused by impaired Z-RNA-binding." evidence="5">
    <location>
        <begin position="1"/>
        <end position="38"/>
    </location>
</feature>
<feature type="mutagenesis site" description="Does not affect virulence or ability to inhibit host ZBP1-dependent necroptosis." evidence="14">
    <original>E</original>
    <variation>A</variation>
    <location>
        <position position="42"/>
    </location>
</feature>
<feature type="mutagenesis site" description="Strongly attenuated virulence caused by reduced replication of the virus in mice. Defects are caused by impaired Z-RNA-binding that prevents host ZBP1-dependent necroptosis." evidence="3 14">
    <original>Y</original>
    <variation>A</variation>
    <location>
        <position position="48"/>
    </location>
</feature>
<feature type="mutagenesis site" description="Allows binding to B-DNA and B-DNA to Z-DNA transition activity." evidence="13">
    <original>DLQRSAM</original>
    <variation>RLQRKAK</variation>
    <location>
        <begin position="49"/>
        <end position="55"/>
    </location>
</feature>
<feature type="mutagenesis site" description="Strongly attenuated virulence caused by reduced replication of the virus in mice. Defects are caused by impaired Z-RNA-binding that prevents host ZBP1-dependent necroptosis." evidence="3 14">
    <original>P</original>
    <variation>A</variation>
    <location>
        <position position="63"/>
    </location>
</feature>
<feature type="mutagenesis site" description="Strongly attenuated virulence caused by reduced replication of the virus in mice." evidence="3">
    <original>P</original>
    <variation>A</variation>
    <location>
        <position position="64"/>
    </location>
</feature>
<feature type="mutagenesis site" description="Strongly decreased dsRNA binding." evidence="15">
    <original>E</original>
    <variation>A</variation>
    <location>
        <position position="124"/>
    </location>
</feature>
<feature type="mutagenesis site" description="Decreased dsRNA binding." evidence="15">
    <original>F</original>
    <variation>A</variation>
    <location>
        <position position="135"/>
    </location>
</feature>
<feature type="mutagenesis site" description="Strongly decreased dsRNA binding." evidence="15">
    <original>F</original>
    <variation>A</variation>
    <location>
        <position position="148"/>
    </location>
</feature>
<feature type="mutagenesis site" description="Strongly decreased dsRNA binding." evidence="15">
    <original>K</original>
    <variation>A</variation>
    <location>
        <position position="167"/>
    </location>
</feature>
<feature type="mutagenesis site" description="Decreased dsRNA binding." evidence="15">
    <original>K</original>
    <variation>A</variation>
    <location>
        <position position="171"/>
    </location>
</feature>
<feature type="sequence conflict" description="In Ref. 4; AA sequence." evidence="18" ref="4">
    <original>P</original>
    <variation>T</variation>
    <location>
        <position position="64"/>
    </location>
</feature>
<feature type="helix" evidence="20">
    <location>
        <begin position="5"/>
        <end position="8"/>
    </location>
</feature>
<feature type="helix" evidence="20">
    <location>
        <begin position="11"/>
        <end position="22"/>
    </location>
</feature>
<feature type="helix" evidence="20">
    <location>
        <begin position="29"/>
        <end position="35"/>
    </location>
</feature>
<feature type="strand" evidence="20">
    <location>
        <begin position="56"/>
        <end position="58"/>
    </location>
</feature>
<feature type="strand" evidence="20">
    <location>
        <begin position="60"/>
        <end position="63"/>
    </location>
</feature>
<feature type="strand" evidence="20">
    <location>
        <begin position="66"/>
        <end position="68"/>
    </location>
</feature>
<name>PG065_VACCW</name>
<organismHost>
    <name type="scientific">Bos taurus</name>
    <name type="common">Bovine</name>
    <dbReference type="NCBI Taxonomy" id="9913"/>
</organismHost>
<accession>P21605</accession>
<accession>Q76ZW2</accession>
<sequence length="190" mass="21504">MSKIYIDERSNAEIVCEAIKTIGIEGATAAQLTRQLNMEKREVNKALYDLQRSAMVYSSDDIPPRWFMTTEADKPDADAMADVIIDDVSREKSMREDHKSFDDVIPAKKIIDWKGANPVTVINEYCQITRRDWSFRIESVGPSNSPTFYACVDIDGRVFDKADGKSKRDAKNNAAKLAVDKLLGYVIIRF</sequence>
<proteinExistence type="evidence at protein level"/>
<reference key="1">
    <citation type="journal article" date="1990" name="Mol. Cell. Biol.">
        <title>Identification of rpo30, a vaccinia virus RNA polymerase gene with structural similarity to a eucaryotic transcription elongation factor.</title>
        <authorList>
            <person name="Ahn B.-Y."/>
            <person name="Gershon P.D."/>
            <person name="Jones E.V."/>
            <person name="Moss B."/>
        </authorList>
    </citation>
    <scope>NUCLEOTIDE SEQUENCE [GENOMIC DNA]</scope>
</reference>
<reference key="2">
    <citation type="submission" date="1990-07" db="EMBL/GenBank/DDBJ databases">
        <authorList>
            <person name="Gershon P.D."/>
            <person name="Jones E.V."/>
            <person name="Moss B."/>
            <person name="Ahn B.-Y."/>
        </authorList>
    </citation>
    <scope>NUCLEOTIDE SEQUENCE [GENOMIC DNA]</scope>
</reference>
<reference key="3">
    <citation type="submission" date="2003-02" db="EMBL/GenBank/DDBJ databases">
        <title>Sequencing of the coding region of Vaccinia-WR to an average 9-fold redundancy and an error rate of 0.16/10kb.</title>
        <authorList>
            <person name="Esposito J.J."/>
            <person name="Frace A.M."/>
            <person name="Sammons S.A."/>
            <person name="Olsen-Rasmussen M."/>
            <person name="Osborne J."/>
            <person name="Wohlhueter R."/>
        </authorList>
    </citation>
    <scope>NUCLEOTIDE SEQUENCE [LARGE SCALE GENOMIC DNA]</scope>
</reference>
<reference key="4">
    <citation type="journal article" date="1992" name="Proc. Natl. Acad. Sci. U.S.A.">
        <title>The E3L gene of vaccinia virus encodes an inhibitor of the interferon-induced, double-stranded RNA-dependent protein kinase.</title>
        <authorList>
            <person name="Chang H.-W."/>
            <person name="Watson J.C."/>
            <person name="Jacobs B.L."/>
        </authorList>
    </citation>
    <scope>PROTEIN SEQUENCE OF 59-68</scope>
    <scope>FUNCTION</scope>
</reference>
<reference key="5">
    <citation type="journal article" date="1991" name="Virology">
        <title>Characterization of a vaccinia virus-encoded double-stranded RNA-binding protein that may be involved in inhibition of the double-stranded RNA-dependent protein kinase.</title>
        <authorList>
            <person name="Watson J.C."/>
            <person name="Chang H.-W."/>
            <person name="Jacobs B.L."/>
        </authorList>
    </citation>
    <scope>FUNCTION</scope>
    <scope>DEVELOPMENTAL STAGE</scope>
</reference>
<reference key="6">
    <citation type="journal article" date="1993" name="Virology">
        <title>Identification of a conserved motif that is necessary for binding of the vaccinia virus E3L gene products to double-stranded RNA.</title>
        <authorList>
            <person name="Chang H.-W."/>
            <person name="Jacobs B.L."/>
        </authorList>
    </citation>
    <scope>RNA-BINDING</scope>
    <scope>ALTERNATIVE INITIATION</scope>
</reference>
<reference key="7">
    <citation type="journal article" date="1996" name="J. Virol.">
        <title>Mutational analysis of the vaccinia virus E3 protein defines amino acid residues involved in E3 binding to double-stranded RNA.</title>
        <authorList>
            <person name="Ho C.K."/>
            <person name="Shuman S."/>
        </authorList>
    </citation>
    <scope>MUTAGENESIS OF GLU-124; PHE-135; PHE-148; LYS-167; ARG-168 AND LYS-171</scope>
    <scope>RNA-BINDING</scope>
</reference>
<reference key="8">
    <citation type="journal article" date="2003" name="Proc. Natl. Acad. Sci. U.S.A.">
        <title>A role for Z-DNA binding in vaccinia virus pathogenesis.</title>
        <authorList>
            <person name="Kim Y.G."/>
            <person name="Muralinath M."/>
            <person name="Brandt T."/>
            <person name="Pearcy M."/>
            <person name="Hauns K."/>
            <person name="Lowenhaupt K."/>
            <person name="Jacobs B.L."/>
            <person name="Rich A."/>
        </authorList>
    </citation>
    <scope>MUTAGENESIS OF TYR-48; PRO-63 AND PRO-64</scope>
</reference>
<reference key="9">
    <citation type="journal article" date="2004" name="Proc. Natl. Acad. Sci. U.S.A.">
        <title>Evidence that vaccinia virulence factor E3L binds to Z-DNA in vivo: Implications for development of a therapy for poxvirus infection.</title>
        <authorList>
            <person name="Kim Y.G."/>
            <person name="Lowenhaupt K."/>
            <person name="Oh D.B."/>
            <person name="Kim K.K."/>
            <person name="Rich A."/>
        </authorList>
    </citation>
    <scope>CAUTION</scope>
</reference>
<reference key="10">
    <citation type="journal article" date="2005" name="Virology">
        <title>The N-terminal domain of the vaccinia virus E3L-protein is required for neurovirulence, but not induction of a protective immune response.</title>
        <authorList>
            <person name="Brandt T."/>
            <person name="Heck M.C."/>
            <person name="Vijaysri S."/>
            <person name="Jentarra G.M."/>
            <person name="Cameron J.M."/>
            <person name="Jacobs B.L."/>
        </authorList>
    </citation>
    <scope>MUTAGENESIS OF 1-MET--MET-38</scope>
</reference>
<reference key="11">
    <citation type="journal article" date="2008" name="PLoS Pathog.">
        <title>Vaccinia virus E3 protein prevents the antiviral action of ISG15.</title>
        <authorList>
            <person name="Guerra S."/>
            <person name="Caceres A."/>
            <person name="Knobeloch K.P."/>
            <person name="Horak I."/>
            <person name="Esteban M."/>
        </authorList>
    </citation>
    <scope>FUNCTION</scope>
</reference>
<reference key="12">
    <citation type="journal article" date="2012" name="J. Virol.">
        <title>The amino terminus of the vaccinia virus E3 protein is necessary to inhibit the interferon response.</title>
        <authorList>
            <person name="White S.D."/>
            <person name="Jacobs B.L."/>
        </authorList>
    </citation>
    <scope>FUNCTION</scope>
</reference>
<reference key="13">
    <citation type="journal article" date="2014" name="J. Virol.">
        <title>ISG15 is counteracted by vaccinia virus E3 protein and controls the proinflammatory response against viral infection.</title>
        <authorList>
            <person name="Eduardo-Correia B."/>
            <person name="Martinez-Romero C."/>
            <person name="Garcia-Sastre A."/>
            <person name="Guerra S."/>
        </authorList>
    </citation>
    <scope>FUNCTION</scope>
    <scope>INTERACTION WITH HOST ISG15</scope>
</reference>
<reference key="14">
    <citation type="journal article" date="2015" name="J. Virol.">
        <title>Mutational analysis of vaccinia virus E3 protein: the biological functions do not correlate with its biochemical capacity to bind double-stranded RNA.</title>
        <authorList>
            <person name="Dueck K.J."/>
            <person name="Hu Y.S."/>
            <person name="Chen P."/>
            <person name="Deschambault Y."/>
            <person name="Lee J."/>
            <person name="Varga J."/>
            <person name="Cao J."/>
        </authorList>
    </citation>
    <scope>FUNCTION</scope>
    <scope>INTERACTION WITH HOST EIF2AK2</scope>
</reference>
<reference key="15">
    <citation type="journal article" date="2017" name="Proc. Natl. Acad. Sci. U.S.A.">
        <title>Inhibition of DAI-dependent necroptosis by the Z-DNA binding domain of the vaccinia virus innate immune evasion protein, E3.</title>
        <authorList>
            <person name="Koehler H."/>
            <person name="Cotsmire S."/>
            <person name="Langland J."/>
            <person name="Kibler K.V."/>
            <person name="Kalman D."/>
            <person name="Upton J.W."/>
            <person name="Mocarski E.S."/>
            <person name="Jacobs B.L."/>
        </authorList>
    </citation>
    <scope>INTERACTION WITH HOST ZBP1</scope>
</reference>
<reference key="16">
    <citation type="journal article" date="2021" name="Cell Host Microbe">
        <title>Vaccinia virus E3 prevents sensing of Z-RNA to block ZBP1-dependent necroptosis.</title>
        <authorList>
            <person name="Koehler H."/>
            <person name="Cotsmire S."/>
            <person name="Zhang T."/>
            <person name="Balachandran S."/>
            <person name="Upton J.W."/>
            <person name="Langland J."/>
            <person name="Kalman D."/>
            <person name="Jacobs B.L."/>
            <person name="Mocarski E.S."/>
        </authorList>
    </citation>
    <scope>FUNCTION</scope>
    <scope>RNA-BINDING</scope>
    <scope>MUTAGENESIS OF GLU-42; TYR-48 AND PRO-63</scope>
    <scope>DOMAIN</scope>
</reference>
<reference key="17">
    <citation type="journal article" date="2015" name="J. Virol.">
        <title>Deciphering poxvirus gene expression by RNA sequencing and ribosome profiling.</title>
        <authorList>
            <person name="Yang Z."/>
            <person name="Cao S."/>
            <person name="Martens C.A."/>
            <person name="Porcella S.F."/>
            <person name="Xie Z."/>
            <person name="Ma M."/>
            <person name="Shen B."/>
            <person name="Moss B."/>
        </authorList>
    </citation>
    <scope>INDUCTION</scope>
</reference>
<reference evidence="19" key="18">
    <citation type="journal article" date="2020" name="Nucleic Acids Res.">
        <title>Dual conformational recognition by Z-DNA binding protein is important for the B-Z transition process.</title>
        <authorList>
            <person name="Park C."/>
            <person name="Zheng X."/>
            <person name="Park C.Y."/>
            <person name="Kim J."/>
            <person name="Lee S.K."/>
            <person name="Won H."/>
            <person name="Choi J."/>
            <person name="Kim Y.G."/>
            <person name="Choi H.J."/>
        </authorList>
    </citation>
    <scope>X-RAY CRYSTALLOGRAPHY (2.40 ANGSTROMS) OF 2-78</scope>
    <scope>MUTAGENESIS OF 49-ASP--MET-55</scope>
</reference>
<evidence type="ECO:0000255" key="1">
    <source>
        <dbReference type="PROSITE-ProRule" id="PRU00073"/>
    </source>
</evidence>
<evidence type="ECO:0000255" key="2">
    <source>
        <dbReference type="PROSITE-ProRule" id="PRU00266"/>
    </source>
</evidence>
<evidence type="ECO:0000269" key="3">
    <source>
    </source>
</evidence>
<evidence type="ECO:0000269" key="4">
    <source>
    </source>
</evidence>
<evidence type="ECO:0000269" key="5">
    <source>
    </source>
</evidence>
<evidence type="ECO:0000269" key="6">
    <source>
    </source>
</evidence>
<evidence type="ECO:0000269" key="7">
    <source>
    </source>
</evidence>
<evidence type="ECO:0000269" key="8">
    <source>
    </source>
</evidence>
<evidence type="ECO:0000269" key="9">
    <source>
    </source>
</evidence>
<evidence type="ECO:0000269" key="10">
    <source>
    </source>
</evidence>
<evidence type="ECO:0000269" key="11">
    <source>
    </source>
</evidence>
<evidence type="ECO:0000269" key="12">
    <source>
    </source>
</evidence>
<evidence type="ECO:0000269" key="13">
    <source>
    </source>
</evidence>
<evidence type="ECO:0000269" key="14">
    <source>
    </source>
</evidence>
<evidence type="ECO:0000269" key="15">
    <source>
    </source>
</evidence>
<evidence type="ECO:0000303" key="16">
    <source>
    </source>
</evidence>
<evidence type="ECO:0000303" key="17">
    <source>
    </source>
</evidence>
<evidence type="ECO:0000305" key="18"/>
<evidence type="ECO:0007744" key="19">
    <source>
        <dbReference type="PDB" id="7C0I"/>
    </source>
</evidence>
<evidence type="ECO:0007829" key="20">
    <source>
        <dbReference type="PDB" id="7C0I"/>
    </source>
</evidence>